<protein>
    <recommendedName>
        <fullName evidence="1">Transcriptional repressor NrdR</fullName>
    </recommendedName>
</protein>
<sequence>MYCPFCRNPDSRVVDSRMADDGSAIRRRRQCPECGRRFTTVETTSLTVIKRSGVGEPFSRSKVINGVRKACQGRPVTEDDLAMLAQEVEETIRASGAAEIEAHEVGLAILSPLQKLDEVAYLRFASVYQAFESLEDFETAISILRHEAEVEAKAAKGKSSEKSPL</sequence>
<gene>
    <name evidence="1" type="primary">nrdR</name>
    <name type="ordered locus">Arth_1586</name>
</gene>
<proteinExistence type="inferred from homology"/>
<reference key="1">
    <citation type="journal article" date="2013" name="Stand. Genomic Sci.">
        <title>Complete genome sequence of Arthrobacter sp. strain FB24.</title>
        <authorList>
            <person name="Nakatsu C.H."/>
            <person name="Barabote R."/>
            <person name="Thompson S."/>
            <person name="Bruce D."/>
            <person name="Detter C."/>
            <person name="Brettin T."/>
            <person name="Han C."/>
            <person name="Beasley F."/>
            <person name="Chen W."/>
            <person name="Konopka A."/>
            <person name="Xie G."/>
        </authorList>
    </citation>
    <scope>NUCLEOTIDE SEQUENCE [LARGE SCALE GENOMIC DNA]</scope>
    <source>
        <strain>FB24</strain>
    </source>
</reference>
<feature type="chain" id="PRO_1000080708" description="Transcriptional repressor NrdR">
    <location>
        <begin position="1"/>
        <end position="165"/>
    </location>
</feature>
<feature type="domain" description="ATP-cone" evidence="1">
    <location>
        <begin position="46"/>
        <end position="136"/>
    </location>
</feature>
<feature type="zinc finger region" evidence="1">
    <location>
        <begin position="3"/>
        <end position="34"/>
    </location>
</feature>
<organism>
    <name type="scientific">Arthrobacter sp. (strain FB24)</name>
    <dbReference type="NCBI Taxonomy" id="290399"/>
    <lineage>
        <taxon>Bacteria</taxon>
        <taxon>Bacillati</taxon>
        <taxon>Actinomycetota</taxon>
        <taxon>Actinomycetes</taxon>
        <taxon>Micrococcales</taxon>
        <taxon>Micrococcaceae</taxon>
        <taxon>Arthrobacter</taxon>
    </lineage>
</organism>
<evidence type="ECO:0000255" key="1">
    <source>
        <dbReference type="HAMAP-Rule" id="MF_00440"/>
    </source>
</evidence>
<dbReference type="EMBL" id="CP000454">
    <property type="protein sequence ID" value="ABK02980.1"/>
    <property type="molecule type" value="Genomic_DNA"/>
</dbReference>
<dbReference type="RefSeq" id="WP_011691446.1">
    <property type="nucleotide sequence ID" value="NC_008541.1"/>
</dbReference>
<dbReference type="SMR" id="A0JVB0"/>
<dbReference type="STRING" id="290399.Arth_1586"/>
<dbReference type="KEGG" id="art:Arth_1586"/>
<dbReference type="eggNOG" id="COG1327">
    <property type="taxonomic scope" value="Bacteria"/>
</dbReference>
<dbReference type="HOGENOM" id="CLU_108412_1_0_11"/>
<dbReference type="OrthoDB" id="9807461at2"/>
<dbReference type="Proteomes" id="UP000000754">
    <property type="component" value="Chromosome"/>
</dbReference>
<dbReference type="GO" id="GO:0005524">
    <property type="term" value="F:ATP binding"/>
    <property type="evidence" value="ECO:0007669"/>
    <property type="project" value="UniProtKB-KW"/>
</dbReference>
<dbReference type="GO" id="GO:0003677">
    <property type="term" value="F:DNA binding"/>
    <property type="evidence" value="ECO:0007669"/>
    <property type="project" value="UniProtKB-KW"/>
</dbReference>
<dbReference type="GO" id="GO:0008270">
    <property type="term" value="F:zinc ion binding"/>
    <property type="evidence" value="ECO:0007669"/>
    <property type="project" value="UniProtKB-UniRule"/>
</dbReference>
<dbReference type="GO" id="GO:0045892">
    <property type="term" value="P:negative regulation of DNA-templated transcription"/>
    <property type="evidence" value="ECO:0007669"/>
    <property type="project" value="UniProtKB-UniRule"/>
</dbReference>
<dbReference type="HAMAP" id="MF_00440">
    <property type="entry name" value="NrdR"/>
    <property type="match status" value="1"/>
</dbReference>
<dbReference type="InterPro" id="IPR005144">
    <property type="entry name" value="ATP-cone_dom"/>
</dbReference>
<dbReference type="InterPro" id="IPR055173">
    <property type="entry name" value="NrdR-like_N"/>
</dbReference>
<dbReference type="InterPro" id="IPR003796">
    <property type="entry name" value="RNR_NrdR-like"/>
</dbReference>
<dbReference type="NCBIfam" id="TIGR00244">
    <property type="entry name" value="transcriptional regulator NrdR"/>
    <property type="match status" value="1"/>
</dbReference>
<dbReference type="PANTHER" id="PTHR30455">
    <property type="entry name" value="TRANSCRIPTIONAL REPRESSOR NRDR"/>
    <property type="match status" value="1"/>
</dbReference>
<dbReference type="PANTHER" id="PTHR30455:SF2">
    <property type="entry name" value="TRANSCRIPTIONAL REPRESSOR NRDR"/>
    <property type="match status" value="1"/>
</dbReference>
<dbReference type="Pfam" id="PF03477">
    <property type="entry name" value="ATP-cone"/>
    <property type="match status" value="1"/>
</dbReference>
<dbReference type="Pfam" id="PF22811">
    <property type="entry name" value="Zn_ribbon_NrdR"/>
    <property type="match status" value="1"/>
</dbReference>
<dbReference type="PROSITE" id="PS51161">
    <property type="entry name" value="ATP_CONE"/>
    <property type="match status" value="1"/>
</dbReference>
<name>NRDR_ARTS2</name>
<accession>A0JVB0</accession>
<comment type="function">
    <text evidence="1">Negatively regulates transcription of bacterial ribonucleotide reductase nrd genes and operons by binding to NrdR-boxes.</text>
</comment>
<comment type="cofactor">
    <cofactor evidence="1">
        <name>Zn(2+)</name>
        <dbReference type="ChEBI" id="CHEBI:29105"/>
    </cofactor>
    <text evidence="1">Binds 1 zinc ion.</text>
</comment>
<comment type="similarity">
    <text evidence="1">Belongs to the NrdR family.</text>
</comment>
<keyword id="KW-0067">ATP-binding</keyword>
<keyword id="KW-0238">DNA-binding</keyword>
<keyword id="KW-0479">Metal-binding</keyword>
<keyword id="KW-0547">Nucleotide-binding</keyword>
<keyword id="KW-1185">Reference proteome</keyword>
<keyword id="KW-0678">Repressor</keyword>
<keyword id="KW-0804">Transcription</keyword>
<keyword id="KW-0805">Transcription regulation</keyword>
<keyword id="KW-0862">Zinc</keyword>
<keyword id="KW-0863">Zinc-finger</keyword>